<reference key="1">
    <citation type="journal article" date="2000" name="Science">
        <title>Complete genome sequence of Neisseria meningitidis serogroup B strain MC58.</title>
        <authorList>
            <person name="Tettelin H."/>
            <person name="Saunders N.J."/>
            <person name="Heidelberg J.F."/>
            <person name="Jeffries A.C."/>
            <person name="Nelson K.E."/>
            <person name="Eisen J.A."/>
            <person name="Ketchum K.A."/>
            <person name="Hood D.W."/>
            <person name="Peden J.F."/>
            <person name="Dodson R.J."/>
            <person name="Nelson W.C."/>
            <person name="Gwinn M.L."/>
            <person name="DeBoy R.T."/>
            <person name="Peterson J.D."/>
            <person name="Hickey E.K."/>
            <person name="Haft D.H."/>
            <person name="Salzberg S.L."/>
            <person name="White O."/>
            <person name="Fleischmann R.D."/>
            <person name="Dougherty B.A."/>
            <person name="Mason T.M."/>
            <person name="Ciecko A."/>
            <person name="Parksey D.S."/>
            <person name="Blair E."/>
            <person name="Cittone H."/>
            <person name="Clark E.B."/>
            <person name="Cotton M.D."/>
            <person name="Utterback T.R."/>
            <person name="Khouri H.M."/>
            <person name="Qin H."/>
            <person name="Vamathevan J.J."/>
            <person name="Gill J."/>
            <person name="Scarlato V."/>
            <person name="Masignani V."/>
            <person name="Pizza M."/>
            <person name="Grandi G."/>
            <person name="Sun L."/>
            <person name="Smith H.O."/>
            <person name="Fraser C.M."/>
            <person name="Moxon E.R."/>
            <person name="Rappuoli R."/>
            <person name="Venter J.C."/>
        </authorList>
    </citation>
    <scope>NUCLEOTIDE SEQUENCE [LARGE SCALE GENOMIC DNA]</scope>
    <source>
        <strain>ATCC BAA-335 / MC58</strain>
    </source>
</reference>
<reference key="2">
    <citation type="journal article" date="2005" name="J. Bacteriol.">
        <title>CrgA is an inducible LysR-type regulator of Neisseria meningitidis, acting both as a repressor and as an activator of gene transcription.</title>
        <authorList>
            <person name="Ieva R."/>
            <person name="Alaimo C."/>
            <person name="Delany I."/>
            <person name="Spohn G."/>
            <person name="Rappuoli R."/>
            <person name="Scarlato V."/>
        </authorList>
    </citation>
    <scope>FUNCTION</scope>
    <scope>ACTIVITY REGULATION</scope>
    <scope>INDUCTION</scope>
    <source>
        <strain>ATCC BAA-335 / MC58</strain>
    </source>
</reference>
<reference key="3">
    <citation type="journal article" date="2008" name="Acta Crystallogr. F">
        <title>Crystallization and preliminary X-ray analysis of CrgA, a LysR-type transcriptional regulator from pathogenic Neisseria meningitidis MC58.</title>
        <authorList>
            <person name="Sainsbury S."/>
            <person name="Ren J."/>
            <person name="Saunders N.J."/>
            <person name="Stuart D.I."/>
            <person name="Owens R.J."/>
        </authorList>
    </citation>
    <scope>SUBUNIT</scope>
    <scope>CRYSTALLIZATION</scope>
    <source>
        <strain>ATCC BAA-335 / MC58</strain>
    </source>
</reference>
<reference evidence="8 9" key="4">
    <citation type="journal article" date="2009" name="Nucleic Acids Res.">
        <title>The structure of CrgA from Neisseria meningitidis reveals a new octameric assembly state for LysR transcriptional regulators.</title>
        <authorList>
            <person name="Sainsbury S."/>
            <person name="Lane L.A."/>
            <person name="Ren J."/>
            <person name="Gilbert R.J."/>
            <person name="Saunders N.J."/>
            <person name="Robinson C.V."/>
            <person name="Stuart D.I."/>
            <person name="Owens R.J."/>
        </authorList>
    </citation>
    <scope>X-RAY CRYSTALLOGRAPHY (2.30 ANGSTROMS)</scope>
    <scope>DNA-BINDING</scope>
    <scope>SUBUNIT</scope>
    <scope>DOMAIN</scope>
    <scope>MUTAGENESIS OF ARG-55</scope>
    <source>
        <strain>ATCC BAA-335 / MC58</strain>
    </source>
</reference>
<accession>Q9JXW7</accession>
<evidence type="ECO:0000255" key="1">
    <source>
        <dbReference type="PROSITE-ProRule" id="PRU00253"/>
    </source>
</evidence>
<evidence type="ECO:0000269" key="2">
    <source>
    </source>
</evidence>
<evidence type="ECO:0000269" key="3">
    <source>
    </source>
</evidence>
<evidence type="ECO:0000269" key="4">
    <source>
    </source>
</evidence>
<evidence type="ECO:0000303" key="5">
    <source>
    </source>
</evidence>
<evidence type="ECO:0000305" key="6"/>
<evidence type="ECO:0000312" key="7">
    <source>
        <dbReference type="EMBL" id="AAF42190.1"/>
    </source>
</evidence>
<evidence type="ECO:0007744" key="8">
    <source>
        <dbReference type="PDB" id="3HHF"/>
    </source>
</evidence>
<evidence type="ECO:0007744" key="9">
    <source>
        <dbReference type="PDB" id="3HHG"/>
    </source>
</evidence>
<evidence type="ECO:0007829" key="10">
    <source>
        <dbReference type="PDB" id="3HHF"/>
    </source>
</evidence>
<evidence type="ECO:0007829" key="11">
    <source>
        <dbReference type="PDB" id="3HHG"/>
    </source>
</evidence>
<comment type="function">
    <text evidence="2">Regulatory protein that activates transcription of mdaB, encoding a NADPH:quinone oxidoreductase, and represses its own transcription (PubMed:15866928). Under the same experimental conditions, no regulation of transcription of pilus and capsule genes is detected (PubMed:15866928).</text>
</comment>
<comment type="activity regulation">
    <text evidence="2">Activation and repression activities are enhanced by the addition of alpha-methylene-gamma-butyrolactone (MBL), an inducer of NADPH:quinone oxidoreductase.</text>
</comment>
<comment type="subunit">
    <text evidence="3 4">Forms oligomers (PubMed:18765907, PubMed:19474343). Forms an octomeric ring-like structure in solution (PubMed:19474343). May form hexadecamers when bound to target DNA (PubMed:19474343).</text>
</comment>
<comment type="induction">
    <text evidence="2">Negatively autoregulated.</text>
</comment>
<comment type="domain">
    <text evidence="4">Each subunit contains an N-terminal DNA-binding domain, connected via a long linker helix to a C-terminal regulatory domain.</text>
</comment>
<comment type="similarity">
    <text evidence="6">Belongs to the LysR transcriptional regulatory family.</text>
</comment>
<comment type="caution">
    <text evidence="2 6">In strain 8013 (AC Q9JPU9), CrgA was reported to control the expression of pili and capsule genes. However, Ieva et al. reported that CrgA and MBL have no effect on transcription of pilus and capsule genes in strain MC58 (PubMed:15866928).</text>
</comment>
<gene>
    <name evidence="5" type="primary">crgA</name>
    <name evidence="7" type="ordered locus">NMB1856</name>
</gene>
<feature type="chain" id="PRO_0000458851" description="HTH-type transcriptional regulator CrgA">
    <location>
        <begin position="1"/>
        <end position="299"/>
    </location>
</feature>
<feature type="domain" description="HTH lysR-type" evidence="1">
    <location>
        <begin position="1"/>
        <end position="60"/>
    </location>
</feature>
<feature type="DNA-binding region" description="H-T-H motif" evidence="1">
    <location>
        <begin position="20"/>
        <end position="39"/>
    </location>
</feature>
<feature type="mutagenesis site" description="Abolishes DNA binding." evidence="4">
    <original>R</original>
    <variation>Q</variation>
    <location>
        <position position="55"/>
    </location>
</feature>
<feature type="helix" evidence="11">
    <location>
        <begin position="5"/>
        <end position="16"/>
    </location>
</feature>
<feature type="strand" evidence="11">
    <location>
        <begin position="17"/>
        <end position="19"/>
    </location>
</feature>
<feature type="helix" evidence="11">
    <location>
        <begin position="20"/>
        <end position="27"/>
    </location>
</feature>
<feature type="helix" evidence="11">
    <location>
        <begin position="31"/>
        <end position="45"/>
    </location>
</feature>
<feature type="strand" evidence="11">
    <location>
        <begin position="54"/>
        <end position="56"/>
    </location>
</feature>
<feature type="helix" evidence="11">
    <location>
        <begin position="61"/>
        <end position="85"/>
    </location>
</feature>
<feature type="strand" evidence="10">
    <location>
        <begin position="93"/>
        <end position="99"/>
    </location>
</feature>
<feature type="helix" evidence="10">
    <location>
        <begin position="101"/>
        <end position="106"/>
    </location>
</feature>
<feature type="helix" evidence="10">
    <location>
        <begin position="108"/>
        <end position="118"/>
    </location>
</feature>
<feature type="strand" evidence="10">
    <location>
        <begin position="122"/>
        <end position="127"/>
    </location>
</feature>
<feature type="strand" evidence="11">
    <location>
        <begin position="130"/>
        <end position="132"/>
    </location>
</feature>
<feature type="helix" evidence="10">
    <location>
        <begin position="133"/>
        <end position="136"/>
    </location>
</feature>
<feature type="strand" evidence="10">
    <location>
        <begin position="139"/>
        <end position="145"/>
    </location>
</feature>
<feature type="strand" evidence="10">
    <location>
        <begin position="152"/>
        <end position="162"/>
    </location>
</feature>
<feature type="strand" evidence="10">
    <location>
        <begin position="164"/>
        <end position="168"/>
    </location>
</feature>
<feature type="helix" evidence="10">
    <location>
        <begin position="170"/>
        <end position="176"/>
    </location>
</feature>
<feature type="helix" evidence="10">
    <location>
        <begin position="182"/>
        <end position="187"/>
    </location>
</feature>
<feature type="strand" evidence="10">
    <location>
        <begin position="192"/>
        <end position="195"/>
    </location>
</feature>
<feature type="helix" evidence="10">
    <location>
        <begin position="197"/>
        <end position="200"/>
    </location>
</feature>
<feature type="strand" evidence="10">
    <location>
        <begin position="201"/>
        <end position="205"/>
    </location>
</feature>
<feature type="strand" evidence="11">
    <location>
        <begin position="207"/>
        <end position="209"/>
    </location>
</feature>
<feature type="strand" evidence="10">
    <location>
        <begin position="211"/>
        <end position="213"/>
    </location>
</feature>
<feature type="strand" evidence="10">
    <location>
        <begin position="217"/>
        <end position="222"/>
    </location>
</feature>
<feature type="helix" evidence="10">
    <location>
        <begin position="223"/>
        <end position="231"/>
    </location>
</feature>
<feature type="strand" evidence="10">
    <location>
        <begin position="236"/>
        <end position="240"/>
    </location>
</feature>
<feature type="helix" evidence="10">
    <location>
        <begin position="241"/>
        <end position="249"/>
    </location>
</feature>
<feature type="strand" evidence="10">
    <location>
        <begin position="252"/>
        <end position="256"/>
    </location>
</feature>
<feature type="turn" evidence="10">
    <location>
        <begin position="258"/>
        <end position="260"/>
    </location>
</feature>
<feature type="strand" evidence="10">
    <location>
        <begin position="266"/>
        <end position="273"/>
    </location>
</feature>
<feature type="helix" evidence="10">
    <location>
        <begin position="274"/>
        <end position="278"/>
    </location>
</feature>
<feature type="helix" evidence="10">
    <location>
        <begin position="280"/>
        <end position="292"/>
    </location>
</feature>
<dbReference type="EMBL" id="AE002098">
    <property type="protein sequence ID" value="AAF42190.1"/>
    <property type="molecule type" value="Genomic_DNA"/>
</dbReference>
<dbReference type="PIR" id="E81035">
    <property type="entry name" value="E81035"/>
</dbReference>
<dbReference type="RefSeq" id="NP_274852.1">
    <property type="nucleotide sequence ID" value="NC_003112.2"/>
</dbReference>
<dbReference type="RefSeq" id="WP_002223018.1">
    <property type="nucleotide sequence ID" value="NC_003112.2"/>
</dbReference>
<dbReference type="PDB" id="3HHF">
    <property type="method" value="X-ray"/>
    <property type="resolution" value="2.30 A"/>
    <property type="chains" value="A/B=89-299"/>
</dbReference>
<dbReference type="PDB" id="3HHG">
    <property type="method" value="X-ray"/>
    <property type="resolution" value="3.20 A"/>
    <property type="chains" value="A/B/C/D/E/F/G/H=1-299"/>
</dbReference>
<dbReference type="PDBsum" id="3HHF"/>
<dbReference type="PDBsum" id="3HHG"/>
<dbReference type="SMR" id="Q9JXW7"/>
<dbReference type="FunCoup" id="Q9JXW7">
    <property type="interactions" value="28"/>
</dbReference>
<dbReference type="STRING" id="122586.NMB1856"/>
<dbReference type="PaxDb" id="122586-NMB1856"/>
<dbReference type="DNASU" id="903242"/>
<dbReference type="KEGG" id="nme:NMB1856"/>
<dbReference type="PATRIC" id="fig|122586.8.peg.2374"/>
<dbReference type="HOGENOM" id="CLU_039613_16_2_4"/>
<dbReference type="InParanoid" id="Q9JXW7"/>
<dbReference type="OrthoDB" id="9786526at2"/>
<dbReference type="EvolutionaryTrace" id="Q9JXW7"/>
<dbReference type="Proteomes" id="UP000000425">
    <property type="component" value="Chromosome"/>
</dbReference>
<dbReference type="GO" id="GO:0003700">
    <property type="term" value="F:DNA-binding transcription factor activity"/>
    <property type="evidence" value="ECO:0000318"/>
    <property type="project" value="GO_Central"/>
</dbReference>
<dbReference type="GO" id="GO:0043565">
    <property type="term" value="F:sequence-specific DNA binding"/>
    <property type="evidence" value="ECO:0000318"/>
    <property type="project" value="GO_Central"/>
</dbReference>
<dbReference type="GO" id="GO:0006351">
    <property type="term" value="P:DNA-templated transcription"/>
    <property type="evidence" value="ECO:0000318"/>
    <property type="project" value="GO_Central"/>
</dbReference>
<dbReference type="CDD" id="cd08478">
    <property type="entry name" value="PBP2_CrgA"/>
    <property type="match status" value="1"/>
</dbReference>
<dbReference type="FunFam" id="1.10.10.10:FF:000001">
    <property type="entry name" value="LysR family transcriptional regulator"/>
    <property type="match status" value="1"/>
</dbReference>
<dbReference type="FunFam" id="3.40.190.10:FF:000126">
    <property type="entry name" value="Transcriptional regulator, LysR family"/>
    <property type="match status" value="1"/>
</dbReference>
<dbReference type="Gene3D" id="3.40.190.10">
    <property type="entry name" value="Periplasmic binding protein-like II"/>
    <property type="match status" value="2"/>
</dbReference>
<dbReference type="Gene3D" id="1.10.10.10">
    <property type="entry name" value="Winged helix-like DNA-binding domain superfamily/Winged helix DNA-binding domain"/>
    <property type="match status" value="1"/>
</dbReference>
<dbReference type="InterPro" id="IPR048071">
    <property type="entry name" value="CrgA-like_PBP2"/>
</dbReference>
<dbReference type="InterPro" id="IPR005119">
    <property type="entry name" value="LysR_subst-bd"/>
</dbReference>
<dbReference type="InterPro" id="IPR000847">
    <property type="entry name" value="Tscrpt_reg_HTH_LysR"/>
</dbReference>
<dbReference type="InterPro" id="IPR036388">
    <property type="entry name" value="WH-like_DNA-bd_sf"/>
</dbReference>
<dbReference type="InterPro" id="IPR036390">
    <property type="entry name" value="WH_DNA-bd_sf"/>
</dbReference>
<dbReference type="InterPro" id="IPR049755">
    <property type="entry name" value="YafC/CrgA"/>
</dbReference>
<dbReference type="NCBIfam" id="NF040888">
    <property type="entry name" value="trans_reg_YafC"/>
    <property type="match status" value="1"/>
</dbReference>
<dbReference type="PANTHER" id="PTHR30537">
    <property type="entry name" value="HTH-TYPE TRANSCRIPTIONAL REGULATOR"/>
    <property type="match status" value="1"/>
</dbReference>
<dbReference type="PANTHER" id="PTHR30537:SF20">
    <property type="entry name" value="TRANSCRIPTIONAL REGULATORY PROTEIN"/>
    <property type="match status" value="1"/>
</dbReference>
<dbReference type="Pfam" id="PF00126">
    <property type="entry name" value="HTH_1"/>
    <property type="match status" value="1"/>
</dbReference>
<dbReference type="Pfam" id="PF03466">
    <property type="entry name" value="LysR_substrate"/>
    <property type="match status" value="1"/>
</dbReference>
<dbReference type="PRINTS" id="PR00039">
    <property type="entry name" value="HTHLYSR"/>
</dbReference>
<dbReference type="SUPFAM" id="SSF53850">
    <property type="entry name" value="Periplasmic binding protein-like II"/>
    <property type="match status" value="1"/>
</dbReference>
<dbReference type="SUPFAM" id="SSF46785">
    <property type="entry name" value="Winged helix' DNA-binding domain"/>
    <property type="match status" value="1"/>
</dbReference>
<dbReference type="PROSITE" id="PS50931">
    <property type="entry name" value="HTH_LYSR"/>
    <property type="match status" value="1"/>
</dbReference>
<protein>
    <recommendedName>
        <fullName evidence="6">HTH-type transcriptional regulator CrgA</fullName>
    </recommendedName>
    <alternativeName>
        <fullName evidence="5">Contact-regulated gene A</fullName>
    </alternativeName>
</protein>
<organism>
    <name type="scientific">Neisseria meningitidis serogroup B (strain ATCC BAA-335 / MC58)</name>
    <dbReference type="NCBI Taxonomy" id="122586"/>
    <lineage>
        <taxon>Bacteria</taxon>
        <taxon>Pseudomonadati</taxon>
        <taxon>Pseudomonadota</taxon>
        <taxon>Betaproteobacteria</taxon>
        <taxon>Neisseriales</taxon>
        <taxon>Neisseriaceae</taxon>
        <taxon>Neisseria</taxon>
    </lineage>
</organism>
<sequence>MKTNSEELTVFVQVVESGSFSRAAEQLAMANSAVSRIVKRLEEKLGVNLLNRTTRQLSLTEEGAQYFRRAQRILQEMAAAETEMLAVHEIPQGVLSVDSAMPMVLHLLAPLAAKFNERYPHIRLSLVSSEGYINLIERKVDIALRAGELDDSGLRARHLFDSRFRVIASPEYLAKHGTPQSTEELAGHQCLGFTEPGSLNTWAVLDAQGNPYKISPHFTASSGEILRSLCLSGCGIVCLSDFLVDNDIAEGKLIPLLAEQTSDKTHPFNAVYYSDKAVNLRLRVFLDFLVEELGNNLCG</sequence>
<keyword id="KW-0002">3D-structure</keyword>
<keyword id="KW-0010">Activator</keyword>
<keyword id="KW-0238">DNA-binding</keyword>
<keyword id="KW-1185">Reference proteome</keyword>
<keyword id="KW-0678">Repressor</keyword>
<keyword id="KW-0804">Transcription</keyword>
<keyword id="KW-0805">Transcription regulation</keyword>
<name>CRGA_NEIMB</name>
<proteinExistence type="evidence at protein level"/>